<name>AROA_ARCFU</name>
<proteinExistence type="inferred from homology"/>
<protein>
    <recommendedName>
        <fullName evidence="1">3-phosphoshikimate 1-carboxyvinyltransferase</fullName>
        <ecNumber evidence="1">2.5.1.19</ecNumber>
    </recommendedName>
    <alternativeName>
        <fullName evidence="1">5-enolpyruvylshikimate-3-phosphate synthase</fullName>
        <shortName evidence="1">EPSP synthase</shortName>
        <shortName evidence="1">EPSPS</shortName>
    </alternativeName>
</protein>
<comment type="function">
    <text evidence="1">Catalyzes the transfer of the enolpyruvyl moiety of phosphoenolpyruvate (PEP) to the 5-hydroxyl of shikimate-3-phosphate (S3P) to produce enolpyruvyl shikimate-3-phosphate and inorganic phosphate.</text>
</comment>
<comment type="catalytic activity">
    <reaction evidence="1">
        <text>3-phosphoshikimate + phosphoenolpyruvate = 5-O-(1-carboxyvinyl)-3-phosphoshikimate + phosphate</text>
        <dbReference type="Rhea" id="RHEA:21256"/>
        <dbReference type="ChEBI" id="CHEBI:43474"/>
        <dbReference type="ChEBI" id="CHEBI:57701"/>
        <dbReference type="ChEBI" id="CHEBI:58702"/>
        <dbReference type="ChEBI" id="CHEBI:145989"/>
        <dbReference type="EC" id="2.5.1.19"/>
    </reaction>
    <physiologicalReaction direction="left-to-right" evidence="1">
        <dbReference type="Rhea" id="RHEA:21257"/>
    </physiologicalReaction>
</comment>
<comment type="pathway">
    <text evidence="1">Metabolic intermediate biosynthesis; chorismate biosynthesis.</text>
</comment>
<comment type="subunit">
    <text evidence="1">Monomer.</text>
</comment>
<comment type="subcellular location">
    <subcellularLocation>
        <location evidence="1">Cytoplasm</location>
    </subcellularLocation>
</comment>
<comment type="similarity">
    <text evidence="1 2">Belongs to the EPSP synthase family.</text>
</comment>
<organism>
    <name type="scientific">Archaeoglobus fulgidus (strain ATCC 49558 / DSM 4304 / JCM 9628 / NBRC 100126 / VC-16)</name>
    <dbReference type="NCBI Taxonomy" id="224325"/>
    <lineage>
        <taxon>Archaea</taxon>
        <taxon>Methanobacteriati</taxon>
        <taxon>Methanobacteriota</taxon>
        <taxon>Archaeoglobi</taxon>
        <taxon>Archaeoglobales</taxon>
        <taxon>Archaeoglobaceae</taxon>
        <taxon>Archaeoglobus</taxon>
    </lineage>
</organism>
<dbReference type="EC" id="2.5.1.19" evidence="1"/>
<dbReference type="EMBL" id="AE000782">
    <property type="protein sequence ID" value="AAB89746.1"/>
    <property type="molecule type" value="Genomic_DNA"/>
</dbReference>
<dbReference type="PIR" id="H69436">
    <property type="entry name" value="H69436"/>
</dbReference>
<dbReference type="RefSeq" id="WP_010878994.1">
    <property type="nucleotide sequence ID" value="NC_000917.1"/>
</dbReference>
<dbReference type="SMR" id="O28775"/>
<dbReference type="STRING" id="224325.AF_1497"/>
<dbReference type="PaxDb" id="224325-AF_1497"/>
<dbReference type="EnsemblBacteria" id="AAB89746">
    <property type="protein sequence ID" value="AAB89746"/>
    <property type="gene ID" value="AF_1497"/>
</dbReference>
<dbReference type="GeneID" id="24795244"/>
<dbReference type="KEGG" id="afu:AF_1497"/>
<dbReference type="eggNOG" id="arCOG04134">
    <property type="taxonomic scope" value="Archaea"/>
</dbReference>
<dbReference type="HOGENOM" id="CLU_024321_0_0_2"/>
<dbReference type="OrthoDB" id="43788at2157"/>
<dbReference type="PhylomeDB" id="O28775"/>
<dbReference type="UniPathway" id="UPA00053"/>
<dbReference type="Proteomes" id="UP000002199">
    <property type="component" value="Chromosome"/>
</dbReference>
<dbReference type="GO" id="GO:0005737">
    <property type="term" value="C:cytoplasm"/>
    <property type="evidence" value="ECO:0007669"/>
    <property type="project" value="UniProtKB-SubCell"/>
</dbReference>
<dbReference type="GO" id="GO:0003866">
    <property type="term" value="F:3-phosphoshikimate 1-carboxyvinyltransferase activity"/>
    <property type="evidence" value="ECO:0007669"/>
    <property type="project" value="UniProtKB-UniRule"/>
</dbReference>
<dbReference type="GO" id="GO:0008652">
    <property type="term" value="P:amino acid biosynthetic process"/>
    <property type="evidence" value="ECO:0007669"/>
    <property type="project" value="UniProtKB-KW"/>
</dbReference>
<dbReference type="GO" id="GO:0009073">
    <property type="term" value="P:aromatic amino acid family biosynthetic process"/>
    <property type="evidence" value="ECO:0007669"/>
    <property type="project" value="UniProtKB-KW"/>
</dbReference>
<dbReference type="GO" id="GO:0009423">
    <property type="term" value="P:chorismate biosynthetic process"/>
    <property type="evidence" value="ECO:0007669"/>
    <property type="project" value="UniProtKB-UniRule"/>
</dbReference>
<dbReference type="CDD" id="cd01556">
    <property type="entry name" value="EPSP_synthase"/>
    <property type="match status" value="1"/>
</dbReference>
<dbReference type="Gene3D" id="3.65.10.10">
    <property type="entry name" value="Enolpyruvate transferase domain"/>
    <property type="match status" value="2"/>
</dbReference>
<dbReference type="HAMAP" id="MF_00210">
    <property type="entry name" value="EPSP_synth"/>
    <property type="match status" value="1"/>
</dbReference>
<dbReference type="InterPro" id="IPR001986">
    <property type="entry name" value="Enolpyruvate_Tfrase_dom"/>
</dbReference>
<dbReference type="InterPro" id="IPR036968">
    <property type="entry name" value="Enolpyruvate_Tfrase_sf"/>
</dbReference>
<dbReference type="InterPro" id="IPR006264">
    <property type="entry name" value="EPSP_synthase"/>
</dbReference>
<dbReference type="InterPro" id="IPR023193">
    <property type="entry name" value="EPSP_synthase_CS"/>
</dbReference>
<dbReference type="InterPro" id="IPR013792">
    <property type="entry name" value="RNA3'P_cycl/enolpyr_Trfase_a/b"/>
</dbReference>
<dbReference type="NCBIfam" id="TIGR01356">
    <property type="entry name" value="aroA"/>
    <property type="match status" value="1"/>
</dbReference>
<dbReference type="PANTHER" id="PTHR21090">
    <property type="entry name" value="AROM/DEHYDROQUINATE SYNTHASE"/>
    <property type="match status" value="1"/>
</dbReference>
<dbReference type="PANTHER" id="PTHR21090:SF5">
    <property type="entry name" value="PENTAFUNCTIONAL AROM POLYPEPTIDE"/>
    <property type="match status" value="1"/>
</dbReference>
<dbReference type="Pfam" id="PF00275">
    <property type="entry name" value="EPSP_synthase"/>
    <property type="match status" value="1"/>
</dbReference>
<dbReference type="PIRSF" id="PIRSF000505">
    <property type="entry name" value="EPSPS"/>
    <property type="match status" value="1"/>
</dbReference>
<dbReference type="SUPFAM" id="SSF55205">
    <property type="entry name" value="EPT/RTPC-like"/>
    <property type="match status" value="1"/>
</dbReference>
<dbReference type="PROSITE" id="PS00104">
    <property type="entry name" value="EPSP_SYNTHASE_1"/>
    <property type="match status" value="1"/>
</dbReference>
<dbReference type="PROSITE" id="PS00885">
    <property type="entry name" value="EPSP_SYNTHASE_2"/>
    <property type="match status" value="1"/>
</dbReference>
<reference key="1">
    <citation type="journal article" date="1997" name="Nature">
        <title>The complete genome sequence of the hyperthermophilic, sulphate-reducing archaeon Archaeoglobus fulgidus.</title>
        <authorList>
            <person name="Klenk H.-P."/>
            <person name="Clayton R.A."/>
            <person name="Tomb J.-F."/>
            <person name="White O."/>
            <person name="Nelson K.E."/>
            <person name="Ketchum K.A."/>
            <person name="Dodson R.J."/>
            <person name="Gwinn M.L."/>
            <person name="Hickey E.K."/>
            <person name="Peterson J.D."/>
            <person name="Richardson D.L."/>
            <person name="Kerlavage A.R."/>
            <person name="Graham D.E."/>
            <person name="Kyrpides N.C."/>
            <person name="Fleischmann R.D."/>
            <person name="Quackenbush J."/>
            <person name="Lee N.H."/>
            <person name="Sutton G.G."/>
            <person name="Gill S.R."/>
            <person name="Kirkness E.F."/>
            <person name="Dougherty B.A."/>
            <person name="McKenney K."/>
            <person name="Adams M.D."/>
            <person name="Loftus B.J."/>
            <person name="Peterson S.N."/>
            <person name="Reich C.I."/>
            <person name="McNeil L.K."/>
            <person name="Badger J.H."/>
            <person name="Glodek A."/>
            <person name="Zhou L."/>
            <person name="Overbeek R."/>
            <person name="Gocayne J.D."/>
            <person name="Weidman J.F."/>
            <person name="McDonald L.A."/>
            <person name="Utterback T.R."/>
            <person name="Cotton M.D."/>
            <person name="Spriggs T."/>
            <person name="Artiach P."/>
            <person name="Kaine B.P."/>
            <person name="Sykes S.M."/>
            <person name="Sadow P.W."/>
            <person name="D'Andrea K.P."/>
            <person name="Bowman C."/>
            <person name="Fujii C."/>
            <person name="Garland S.A."/>
            <person name="Mason T.M."/>
            <person name="Olsen G.J."/>
            <person name="Fraser C.M."/>
            <person name="Smith H.O."/>
            <person name="Woese C.R."/>
            <person name="Venter J.C."/>
        </authorList>
    </citation>
    <scope>NUCLEOTIDE SEQUENCE [LARGE SCALE GENOMIC DNA]</scope>
    <source>
        <strain>ATCC 49558 / DSM 4304 / JCM 9628 / NBRC 100126 / VC-16</strain>
    </source>
</reference>
<accession>O28775</accession>
<gene>
    <name evidence="1" type="primary">aroA</name>
    <name type="ordered locus">AF_1497</name>
</gene>
<sequence length="416" mass="45086">MDVIVRKGEIRGKAKPPASKSYTHRAFIAASLSPSARVVNPLISEDTISTLNACKRIGAAVLKKGNEWLFSGVDGVEAEGYFNFANSGTTLRIFTGLLSLSPFRSVVDGDESLRKRPNGELVLALSKLGARFKGREPYTPPFSVQGVIKGGEVEIEAPSSQFVSSLLFALSLAEGDSSLRVEKVKSQPYIDVTLDVLRESGVKVEREGNFYHIPGSQSFKLRRYDVPADFSSASYLIAAGLIAGEVVLEGMFESAQGDRKIVDICREMGGSVEWDKKRGVIRAERSELEGVEVDASDIPDLVPTIAVLAAVAKGKTRIYNAEHLRIKEIDRIEGIHQNLKALGVESKPLKDGLIIKGGKGEFRGVVDSFGDHRMALAFSLLGLLGEVKCRNAEVVSVSFPGYFRVLESLGASVIRL</sequence>
<evidence type="ECO:0000255" key="1">
    <source>
        <dbReference type="HAMAP-Rule" id="MF_00210"/>
    </source>
</evidence>
<evidence type="ECO:0000305" key="2"/>
<keyword id="KW-0028">Amino-acid biosynthesis</keyword>
<keyword id="KW-0057">Aromatic amino acid biosynthesis</keyword>
<keyword id="KW-0963">Cytoplasm</keyword>
<keyword id="KW-1185">Reference proteome</keyword>
<keyword id="KW-0808">Transferase</keyword>
<feature type="chain" id="PRO_0000088326" description="3-phosphoshikimate 1-carboxyvinyltransferase">
    <location>
        <begin position="1"/>
        <end position="416"/>
    </location>
</feature>
<feature type="active site" description="Proton acceptor" evidence="1">
    <location>
        <position position="300"/>
    </location>
</feature>
<feature type="binding site" evidence="1">
    <location>
        <position position="20"/>
    </location>
    <ligand>
        <name>3-phosphoshikimate</name>
        <dbReference type="ChEBI" id="CHEBI:145989"/>
    </ligand>
</feature>
<feature type="binding site" evidence="1">
    <location>
        <position position="20"/>
    </location>
    <ligand>
        <name>phosphoenolpyruvate</name>
        <dbReference type="ChEBI" id="CHEBI:58702"/>
    </ligand>
</feature>
<feature type="binding site" evidence="1">
    <location>
        <position position="21"/>
    </location>
    <ligand>
        <name>3-phosphoshikimate</name>
        <dbReference type="ChEBI" id="CHEBI:145989"/>
    </ligand>
</feature>
<feature type="binding site" evidence="1">
    <location>
        <position position="25"/>
    </location>
    <ligand>
        <name>3-phosphoshikimate</name>
        <dbReference type="ChEBI" id="CHEBI:145989"/>
    </ligand>
</feature>
<feature type="binding site" evidence="1">
    <location>
        <position position="88"/>
    </location>
    <ligand>
        <name>phosphoenolpyruvate</name>
        <dbReference type="ChEBI" id="CHEBI:58702"/>
    </ligand>
</feature>
<feature type="binding site" evidence="1">
    <location>
        <position position="116"/>
    </location>
    <ligand>
        <name>phosphoenolpyruvate</name>
        <dbReference type="ChEBI" id="CHEBI:58702"/>
    </ligand>
</feature>
<feature type="binding site" evidence="1">
    <location>
        <position position="159"/>
    </location>
    <ligand>
        <name>3-phosphoshikimate</name>
        <dbReference type="ChEBI" id="CHEBI:145989"/>
    </ligand>
</feature>
<feature type="binding site" evidence="1">
    <location>
        <position position="160"/>
    </location>
    <ligand>
        <name>3-phosphoshikimate</name>
        <dbReference type="ChEBI" id="CHEBI:145989"/>
    </ligand>
</feature>
<feature type="binding site" evidence="1">
    <location>
        <position position="161"/>
    </location>
    <ligand>
        <name>3-phosphoshikimate</name>
        <dbReference type="ChEBI" id="CHEBI:145989"/>
    </ligand>
</feature>
<feature type="binding site" evidence="1">
    <location>
        <position position="161"/>
    </location>
    <ligand>
        <name>phosphoenolpyruvate</name>
        <dbReference type="ChEBI" id="CHEBI:58702"/>
    </ligand>
</feature>
<feature type="binding site" evidence="1">
    <location>
        <position position="186"/>
    </location>
    <ligand>
        <name>3-phosphoshikimate</name>
        <dbReference type="ChEBI" id="CHEBI:145989"/>
    </ligand>
</feature>
<feature type="binding site" evidence="1">
    <location>
        <position position="300"/>
    </location>
    <ligand>
        <name>3-phosphoshikimate</name>
        <dbReference type="ChEBI" id="CHEBI:145989"/>
    </ligand>
</feature>
<feature type="binding site" evidence="1">
    <location>
        <position position="327"/>
    </location>
    <ligand>
        <name>3-phosphoshikimate</name>
        <dbReference type="ChEBI" id="CHEBI:145989"/>
    </ligand>
</feature>
<feature type="binding site" evidence="1">
    <location>
        <position position="331"/>
    </location>
    <ligand>
        <name>phosphoenolpyruvate</name>
        <dbReference type="ChEBI" id="CHEBI:58702"/>
    </ligand>
</feature>
<feature type="binding site" evidence="1">
    <location>
        <position position="373"/>
    </location>
    <ligand>
        <name>phosphoenolpyruvate</name>
        <dbReference type="ChEBI" id="CHEBI:58702"/>
    </ligand>
</feature>